<accession>Q0A9G3</accession>
<gene>
    <name evidence="1" type="primary">dnaE2</name>
    <name type="ordered locus">Mlg_1175</name>
</gene>
<feature type="chain" id="PRO_1000070587" description="Error-prone DNA polymerase">
    <location>
        <begin position="1"/>
        <end position="1025"/>
    </location>
</feature>
<sequence>MPIDYAELHCLSCFSFLRGASQPAELVQRAAELGYRALALTDACSVAGAVRAHQAAKETDLHLIHGSEIRIHQGPLLVLLAPCRRAWAELCALISLGRSQARKGDYRLEREQLEGTLPHCLALWVPDDAPHDAEQGRWFARHFGDRGHVAVALHHGPDDEARLQRLLALADRFRLPAVAAGGVLMHRRGRRALQDTLSALRHRRTLAAMGTALECSGERHLRSLHSLARLYPPALLRRSVHLADQCRFSLDKLRYEYPAELVPAGETPASYLRRLTLEGARRHWPQGMPDKVAHQVDHELALIAEMGYEPFFLTVHDVVAFARRRGILCQGRGSSANSAVCFCLGITAVDPARQSLLFERFISKERGEPPDIDVDFEHERREEVIQYIYRKYGRHRAALAATVIRYRPRSALRDAGRALGLDAATIDRLAGSIQWWDGKRVDPERLREAGLNPDDPRLARTVAIAGQLLGLPRHLSQHVGGFVISEGPISELVPTENAAMAGRTIIQWDKDDLEALGLLKVDVLALGMLSCIRRAFDLLAGFRGRRLTLADVPAEDPAVYRMISDADTMGVFQIESRAQMAMLPRLRPQTFYDLVIEVAIVRPGPIQGDMVHPYLRRREGLEPVDYPSEAVRGVLARTLGVPIFQEQVMQLAVVAAGFTPGEADALRRAMAAWKRKGGLGPFRDKLLKGMRRNGYCEDYAERLFRQIQGFGEYGFPESHAASFALLVYVSAWLKCHEPALFTCALLNSQPMGFYAPAQLLRDAERHGVEIRPVDVRHSDWDCSPEHRGDGEPALRLGLRLVRGLNRRAADRLIAARGRRPFRDVQEMARRAALHRRDLETLAHAGALRGLAGHRRAAWWQVLGAEAGLPVFEDLHIEEAAPALDAPAEGEDLVADYTSLGFTLGRHPLALLRPQLRRRRLLTAADLASTGHGRLVRTAGLVINRQRPGSAGGVTFLTLEDETGQINLVVWKATAEAQRRTLLAARLLMVSGIWERKGAVTHLVAGRLEDWSDWLGALDVRSRDFH</sequence>
<reference key="1">
    <citation type="submission" date="2006-08" db="EMBL/GenBank/DDBJ databases">
        <title>Complete sequence of Alkalilimnicola ehrilichei MLHE-1.</title>
        <authorList>
            <person name="Copeland A."/>
            <person name="Lucas S."/>
            <person name="Lapidus A."/>
            <person name="Barry K."/>
            <person name="Detter J.C."/>
            <person name="Glavina del Rio T."/>
            <person name="Hammon N."/>
            <person name="Israni S."/>
            <person name="Dalin E."/>
            <person name="Tice H."/>
            <person name="Pitluck S."/>
            <person name="Sims D."/>
            <person name="Brettin T."/>
            <person name="Bruce D."/>
            <person name="Han C."/>
            <person name="Tapia R."/>
            <person name="Gilna P."/>
            <person name="Schmutz J."/>
            <person name="Larimer F."/>
            <person name="Land M."/>
            <person name="Hauser L."/>
            <person name="Kyrpides N."/>
            <person name="Mikhailova N."/>
            <person name="Oremland R.S."/>
            <person name="Hoeft S.E."/>
            <person name="Switzer-Blum J."/>
            <person name="Kulp T."/>
            <person name="King G."/>
            <person name="Tabita R."/>
            <person name="Witte B."/>
            <person name="Santini J.M."/>
            <person name="Basu P."/>
            <person name="Hollibaugh J.T."/>
            <person name="Xie G."/>
            <person name="Stolz J.F."/>
            <person name="Richardson P."/>
        </authorList>
    </citation>
    <scope>NUCLEOTIDE SEQUENCE [LARGE SCALE GENOMIC DNA]</scope>
    <source>
        <strain>ATCC BAA-1101 / DSM 17681 / MLHE-1</strain>
    </source>
</reference>
<organism>
    <name type="scientific">Alkalilimnicola ehrlichii (strain ATCC BAA-1101 / DSM 17681 / MLHE-1)</name>
    <dbReference type="NCBI Taxonomy" id="187272"/>
    <lineage>
        <taxon>Bacteria</taxon>
        <taxon>Pseudomonadati</taxon>
        <taxon>Pseudomonadota</taxon>
        <taxon>Gammaproteobacteria</taxon>
        <taxon>Chromatiales</taxon>
        <taxon>Ectothiorhodospiraceae</taxon>
        <taxon>Alkalilimnicola</taxon>
    </lineage>
</organism>
<dbReference type="EC" id="2.7.7.7" evidence="1"/>
<dbReference type="EMBL" id="CP000453">
    <property type="protein sequence ID" value="ABI56524.1"/>
    <property type="molecule type" value="Genomic_DNA"/>
</dbReference>
<dbReference type="RefSeq" id="WP_011628919.1">
    <property type="nucleotide sequence ID" value="NC_008340.1"/>
</dbReference>
<dbReference type="SMR" id="Q0A9G3"/>
<dbReference type="KEGG" id="aeh:Mlg_1175"/>
<dbReference type="eggNOG" id="COG0587">
    <property type="taxonomic scope" value="Bacteria"/>
</dbReference>
<dbReference type="HOGENOM" id="CLU_001600_4_0_6"/>
<dbReference type="OrthoDB" id="9803237at2"/>
<dbReference type="Proteomes" id="UP000001962">
    <property type="component" value="Chromosome"/>
</dbReference>
<dbReference type="GO" id="GO:0005737">
    <property type="term" value="C:cytoplasm"/>
    <property type="evidence" value="ECO:0007669"/>
    <property type="project" value="UniProtKB-SubCell"/>
</dbReference>
<dbReference type="GO" id="GO:0008408">
    <property type="term" value="F:3'-5' exonuclease activity"/>
    <property type="evidence" value="ECO:0007669"/>
    <property type="project" value="InterPro"/>
</dbReference>
<dbReference type="GO" id="GO:0003887">
    <property type="term" value="F:DNA-directed DNA polymerase activity"/>
    <property type="evidence" value="ECO:0007669"/>
    <property type="project" value="UniProtKB-UniRule"/>
</dbReference>
<dbReference type="GO" id="GO:0003676">
    <property type="term" value="F:nucleic acid binding"/>
    <property type="evidence" value="ECO:0007669"/>
    <property type="project" value="InterPro"/>
</dbReference>
<dbReference type="GO" id="GO:0006281">
    <property type="term" value="P:DNA repair"/>
    <property type="evidence" value="ECO:0007669"/>
    <property type="project" value="UniProtKB-UniRule"/>
</dbReference>
<dbReference type="GO" id="GO:0006260">
    <property type="term" value="P:DNA replication"/>
    <property type="evidence" value="ECO:0007669"/>
    <property type="project" value="UniProtKB-KW"/>
</dbReference>
<dbReference type="CDD" id="cd04485">
    <property type="entry name" value="DnaE_OBF"/>
    <property type="match status" value="1"/>
</dbReference>
<dbReference type="CDD" id="cd07434">
    <property type="entry name" value="PHP_PolIIIA_DnaE2"/>
    <property type="match status" value="1"/>
</dbReference>
<dbReference type="Gene3D" id="1.10.150.870">
    <property type="match status" value="1"/>
</dbReference>
<dbReference type="Gene3D" id="3.20.20.140">
    <property type="entry name" value="Metal-dependent hydrolases"/>
    <property type="match status" value="1"/>
</dbReference>
<dbReference type="HAMAP" id="MF_01902">
    <property type="entry name" value="DNApol_error_prone"/>
    <property type="match status" value="1"/>
</dbReference>
<dbReference type="InterPro" id="IPR011708">
    <property type="entry name" value="DNA_pol3_alpha_NTPase_dom"/>
</dbReference>
<dbReference type="InterPro" id="IPR040982">
    <property type="entry name" value="DNA_pol3_finger"/>
</dbReference>
<dbReference type="InterPro" id="IPR023073">
    <property type="entry name" value="DnaE2"/>
</dbReference>
<dbReference type="InterPro" id="IPR004805">
    <property type="entry name" value="DnaE2/DnaE/PolC"/>
</dbReference>
<dbReference type="InterPro" id="IPR029460">
    <property type="entry name" value="DNAPol_HHH"/>
</dbReference>
<dbReference type="InterPro" id="IPR004365">
    <property type="entry name" value="NA-bd_OB_tRNA"/>
</dbReference>
<dbReference type="InterPro" id="IPR004013">
    <property type="entry name" value="PHP_dom"/>
</dbReference>
<dbReference type="InterPro" id="IPR003141">
    <property type="entry name" value="Pol/His_phosphatase_N"/>
</dbReference>
<dbReference type="InterPro" id="IPR016195">
    <property type="entry name" value="Pol/histidinol_Pase-like"/>
</dbReference>
<dbReference type="NCBIfam" id="TIGR00594">
    <property type="entry name" value="polc"/>
    <property type="match status" value="1"/>
</dbReference>
<dbReference type="NCBIfam" id="NF004225">
    <property type="entry name" value="PRK05672.1"/>
    <property type="match status" value="1"/>
</dbReference>
<dbReference type="PANTHER" id="PTHR32294">
    <property type="entry name" value="DNA POLYMERASE III SUBUNIT ALPHA"/>
    <property type="match status" value="1"/>
</dbReference>
<dbReference type="PANTHER" id="PTHR32294:SF4">
    <property type="entry name" value="ERROR-PRONE DNA POLYMERASE"/>
    <property type="match status" value="1"/>
</dbReference>
<dbReference type="Pfam" id="PF07733">
    <property type="entry name" value="DNA_pol3_alpha"/>
    <property type="match status" value="1"/>
</dbReference>
<dbReference type="Pfam" id="PF17657">
    <property type="entry name" value="DNA_pol3_finger"/>
    <property type="match status" value="1"/>
</dbReference>
<dbReference type="Pfam" id="PF14579">
    <property type="entry name" value="HHH_6"/>
    <property type="match status" value="1"/>
</dbReference>
<dbReference type="Pfam" id="PF02811">
    <property type="entry name" value="PHP"/>
    <property type="match status" value="1"/>
</dbReference>
<dbReference type="Pfam" id="PF01336">
    <property type="entry name" value="tRNA_anti-codon"/>
    <property type="match status" value="1"/>
</dbReference>
<dbReference type="SMART" id="SM00481">
    <property type="entry name" value="POLIIIAc"/>
    <property type="match status" value="1"/>
</dbReference>
<dbReference type="SUPFAM" id="SSF89550">
    <property type="entry name" value="PHP domain-like"/>
    <property type="match status" value="1"/>
</dbReference>
<name>DNAE2_ALKEH</name>
<proteinExistence type="inferred from homology"/>
<protein>
    <recommendedName>
        <fullName evidence="1">Error-prone DNA polymerase</fullName>
        <ecNumber evidence="1">2.7.7.7</ecNumber>
    </recommendedName>
</protein>
<evidence type="ECO:0000255" key="1">
    <source>
        <dbReference type="HAMAP-Rule" id="MF_01902"/>
    </source>
</evidence>
<comment type="function">
    <text evidence="1">DNA polymerase involved in damage-induced mutagenesis and translesion synthesis (TLS). It is not the major replicative DNA polymerase.</text>
</comment>
<comment type="catalytic activity">
    <reaction evidence="1">
        <text>DNA(n) + a 2'-deoxyribonucleoside 5'-triphosphate = DNA(n+1) + diphosphate</text>
        <dbReference type="Rhea" id="RHEA:22508"/>
        <dbReference type="Rhea" id="RHEA-COMP:17339"/>
        <dbReference type="Rhea" id="RHEA-COMP:17340"/>
        <dbReference type="ChEBI" id="CHEBI:33019"/>
        <dbReference type="ChEBI" id="CHEBI:61560"/>
        <dbReference type="ChEBI" id="CHEBI:173112"/>
        <dbReference type="EC" id="2.7.7.7"/>
    </reaction>
</comment>
<comment type="subcellular location">
    <subcellularLocation>
        <location evidence="1">Cytoplasm</location>
    </subcellularLocation>
</comment>
<comment type="similarity">
    <text evidence="1">Belongs to the DNA polymerase type-C family. DnaE2 subfamily.</text>
</comment>
<keyword id="KW-0963">Cytoplasm</keyword>
<keyword id="KW-0227">DNA damage</keyword>
<keyword id="KW-0234">DNA repair</keyword>
<keyword id="KW-0235">DNA replication</keyword>
<keyword id="KW-0239">DNA-directed DNA polymerase</keyword>
<keyword id="KW-0548">Nucleotidyltransferase</keyword>
<keyword id="KW-1185">Reference proteome</keyword>
<keyword id="KW-0808">Transferase</keyword>